<accession>Q5RJI2</accession>
<sequence>MARKRKPPSSQGDPRRYDPDFQGPTAKRTCTDVLCCLIFLLFILGYVLLGLLAWAHGDPRKMAYPTDSQGHFCGQKGTPNENKTVLFYFNIFRCTSPSMMLRLQCSTTQICVSRCPERFLTYLDMQFLNKEDKNYWEYYRQFCKAKAKPVETLRDLLISGDCPLAVYPSRPFLQRCIPDLSALNGTWTPGSRMKFEDGSGQTRTMLEFREAANGISDLINARTIGLKLLEDYATSWKWILIGLTVAMALSWTFLILLRFTAGFLFWFFIFGVLGIIGYGIWYCFLEYSSIQQRPQSTFWMYGFGIQRRVNMFFHLKETWFSMMIILSAIEIIIIIVLIFLRTRIQVAIILLQEGSKAISYLPSALIYPVLTFILLSICISYWAVTAVFLATSGVPIFKVMVPAGQCIYEDETCDPEIFPYTNIPKDCPGASCNFAFYGGRSMYHNYILTFQVYNLFAFLWLINFVIALGQCALAGAFASYYWAMKKPDDIPPYPLFTAFGRAVRYHTGSLAFGSLILASVQMFKVIVEYLDRRLKKAQNSAAQFLHCCLQCCFWCLEKMVKFLNRNAYIMIALYGKNFCESTRDAFYLLMRNILKVTVTDEVTYFVLLLGKVLVSGIVGVLAFLLFTERLQIIVDGPTTLNYYWVPFLTLVFGSYMIAHGFFSVYSMCVETIFICFLEDLERNEGSPSRPYFVTPALMNILLEQGKIKKQ</sequence>
<comment type="function">
    <text evidence="1">Choline/H+ antiporter.</text>
</comment>
<comment type="catalytic activity">
    <reaction evidence="1">
        <text>choline(out) + n H(+)(in) = choline(in) + n H(+)(out)</text>
        <dbReference type="Rhea" id="RHEA:75463"/>
        <dbReference type="ChEBI" id="CHEBI:15354"/>
        <dbReference type="ChEBI" id="CHEBI:15378"/>
    </reaction>
</comment>
<comment type="subcellular location">
    <subcellularLocation>
        <location evidence="1">Cell membrane</location>
        <topology evidence="2">Multi-pass membrane protein</topology>
    </subcellularLocation>
</comment>
<comment type="similarity">
    <text evidence="4">Belongs to the CTL (choline transporter-like) family.</text>
</comment>
<gene>
    <name type="primary">Slc44a5</name>
    <name type="synonym">Ctl5</name>
</gene>
<reference key="1">
    <citation type="journal article" date="2004" name="Genome Res.">
        <title>The status, quality, and expansion of the NIH full-length cDNA project: the Mammalian Gene Collection (MGC).</title>
        <authorList>
            <consortium name="The MGC Project Team"/>
        </authorList>
    </citation>
    <scope>NUCLEOTIDE SEQUENCE [LARGE SCALE MRNA]</scope>
    <source>
        <strain>C57BL/6J</strain>
        <tissue>Brain</tissue>
    </source>
</reference>
<keyword id="KW-0050">Antiport</keyword>
<keyword id="KW-1003">Cell membrane</keyword>
<keyword id="KW-0325">Glycoprotein</keyword>
<keyword id="KW-0472">Membrane</keyword>
<keyword id="KW-1185">Reference proteome</keyword>
<keyword id="KW-0812">Transmembrane</keyword>
<keyword id="KW-1133">Transmembrane helix</keyword>
<keyword id="KW-0813">Transport</keyword>
<protein>
    <recommendedName>
        <fullName>Choline transporter-like protein 5</fullName>
    </recommendedName>
    <alternativeName>
        <fullName>Solute carrier family 44 member 5</fullName>
    </alternativeName>
</protein>
<feature type="chain" id="PRO_0000191728" description="Choline transporter-like protein 5">
    <location>
        <begin position="1"/>
        <end position="710"/>
    </location>
</feature>
<feature type="topological domain" description="Cytoplasmic" evidence="2">
    <location>
        <begin position="1"/>
        <end position="32"/>
    </location>
</feature>
<feature type="transmembrane region" description="Helical" evidence="2">
    <location>
        <begin position="33"/>
        <end position="53"/>
    </location>
</feature>
<feature type="topological domain" description="Extracellular" evidence="2">
    <location>
        <begin position="54"/>
        <end position="236"/>
    </location>
</feature>
<feature type="transmembrane region" description="Helical" evidence="2">
    <location>
        <begin position="237"/>
        <end position="257"/>
    </location>
</feature>
<feature type="topological domain" description="Cytoplasmic" evidence="2">
    <location>
        <begin position="258"/>
        <end position="260"/>
    </location>
</feature>
<feature type="transmembrane region" description="Helical" evidence="2">
    <location>
        <begin position="261"/>
        <end position="281"/>
    </location>
</feature>
<feature type="topological domain" description="Extracellular" evidence="2">
    <location>
        <begin position="282"/>
        <end position="319"/>
    </location>
</feature>
<feature type="transmembrane region" description="Helical" evidence="2">
    <location>
        <begin position="320"/>
        <end position="340"/>
    </location>
</feature>
<feature type="topological domain" description="Cytoplasmic" evidence="2">
    <location>
        <begin position="341"/>
        <end position="345"/>
    </location>
</feature>
<feature type="transmembrane region" description="Helical" evidence="2">
    <location>
        <begin position="346"/>
        <end position="366"/>
    </location>
</feature>
<feature type="topological domain" description="Extracellular" evidence="2">
    <location>
        <begin position="367"/>
        <end position="368"/>
    </location>
</feature>
<feature type="transmembrane region" description="Helical" evidence="2">
    <location>
        <begin position="369"/>
        <end position="389"/>
    </location>
</feature>
<feature type="topological domain" description="Cytoplasmic" evidence="2">
    <location>
        <begin position="390"/>
        <end position="454"/>
    </location>
</feature>
<feature type="transmembrane region" description="Helical" evidence="2">
    <location>
        <begin position="455"/>
        <end position="475"/>
    </location>
</feature>
<feature type="topological domain" description="Extracellular" evidence="2">
    <location>
        <begin position="476"/>
        <end position="509"/>
    </location>
</feature>
<feature type="transmembrane region" description="Helical" evidence="2">
    <location>
        <begin position="510"/>
        <end position="530"/>
    </location>
</feature>
<feature type="topological domain" description="Cytoplasmic" evidence="2">
    <location>
        <begin position="531"/>
        <end position="604"/>
    </location>
</feature>
<feature type="transmembrane region" description="Helical" evidence="2">
    <location>
        <begin position="605"/>
        <end position="625"/>
    </location>
</feature>
<feature type="topological domain" description="Extracellular" evidence="2">
    <location>
        <begin position="626"/>
        <end position="643"/>
    </location>
</feature>
<feature type="transmembrane region" description="Helical" evidence="2">
    <location>
        <begin position="644"/>
        <end position="664"/>
    </location>
</feature>
<feature type="topological domain" description="Cytoplasmic" evidence="2">
    <location>
        <begin position="665"/>
        <end position="710"/>
    </location>
</feature>
<feature type="region of interest" description="Disordered" evidence="3">
    <location>
        <begin position="1"/>
        <end position="21"/>
    </location>
</feature>
<feature type="glycosylation site" description="N-linked (GlcNAc...) asparagine" evidence="2">
    <location>
        <position position="82"/>
    </location>
</feature>
<feature type="glycosylation site" description="N-linked (GlcNAc...) asparagine" evidence="2">
    <location>
        <position position="184"/>
    </location>
</feature>
<proteinExistence type="evidence at transcript level"/>
<organism>
    <name type="scientific">Mus musculus</name>
    <name type="common">Mouse</name>
    <dbReference type="NCBI Taxonomy" id="10090"/>
    <lineage>
        <taxon>Eukaryota</taxon>
        <taxon>Metazoa</taxon>
        <taxon>Chordata</taxon>
        <taxon>Craniata</taxon>
        <taxon>Vertebrata</taxon>
        <taxon>Euteleostomi</taxon>
        <taxon>Mammalia</taxon>
        <taxon>Eutheria</taxon>
        <taxon>Euarchontoglires</taxon>
        <taxon>Glires</taxon>
        <taxon>Rodentia</taxon>
        <taxon>Myomorpha</taxon>
        <taxon>Muroidea</taxon>
        <taxon>Muridae</taxon>
        <taxon>Murinae</taxon>
        <taxon>Mus</taxon>
        <taxon>Mus</taxon>
    </lineage>
</organism>
<dbReference type="EMBL" id="BC086641">
    <property type="protein sequence ID" value="AAH86641.1"/>
    <property type="molecule type" value="mRNA"/>
</dbReference>
<dbReference type="CCDS" id="CCDS38679.1"/>
<dbReference type="RefSeq" id="NP_001074732.1">
    <property type="nucleotide sequence ID" value="NM_001081263.1"/>
</dbReference>
<dbReference type="SMR" id="Q5RJI2"/>
<dbReference type="BioGRID" id="232387">
    <property type="interactions" value="1"/>
</dbReference>
<dbReference type="FunCoup" id="Q5RJI2">
    <property type="interactions" value="324"/>
</dbReference>
<dbReference type="STRING" id="10090.ENSMUSP00000087394"/>
<dbReference type="GlyCosmos" id="Q5RJI2">
    <property type="glycosylation" value="2 sites, No reported glycans"/>
</dbReference>
<dbReference type="GlyGen" id="Q5RJI2">
    <property type="glycosylation" value="3 sites"/>
</dbReference>
<dbReference type="PhosphoSitePlus" id="Q5RJI2"/>
<dbReference type="jPOST" id="Q5RJI2"/>
<dbReference type="PaxDb" id="10090-ENSMUSP00000087394"/>
<dbReference type="PeptideAtlas" id="Q5RJI2"/>
<dbReference type="ProteomicsDB" id="285396"/>
<dbReference type="Antibodypedia" id="66042">
    <property type="antibodies" value="10 antibodies from 6 providers"/>
</dbReference>
<dbReference type="DNASU" id="242259"/>
<dbReference type="Ensembl" id="ENSMUST00000089948.6">
    <property type="protein sequence ID" value="ENSMUSP00000087394.6"/>
    <property type="gene ID" value="ENSMUSG00000028360.11"/>
</dbReference>
<dbReference type="GeneID" id="242259"/>
<dbReference type="KEGG" id="mmu:242259"/>
<dbReference type="UCSC" id="uc008ruk.1">
    <property type="organism name" value="mouse"/>
</dbReference>
<dbReference type="AGR" id="MGI:3035141"/>
<dbReference type="CTD" id="204962"/>
<dbReference type="MGI" id="MGI:3035141">
    <property type="gene designation" value="Slc44a5"/>
</dbReference>
<dbReference type="VEuPathDB" id="HostDB:ENSMUSG00000028360"/>
<dbReference type="eggNOG" id="KOG1362">
    <property type="taxonomic scope" value="Eukaryota"/>
</dbReference>
<dbReference type="GeneTree" id="ENSGT00940000156600"/>
<dbReference type="HOGENOM" id="CLU_017181_3_1_1"/>
<dbReference type="InParanoid" id="Q5RJI2"/>
<dbReference type="OMA" id="FNLFRCT"/>
<dbReference type="PhylomeDB" id="Q5RJI2"/>
<dbReference type="TreeFam" id="TF313325"/>
<dbReference type="Reactome" id="R-MMU-1483191">
    <property type="pathway name" value="Synthesis of PC"/>
</dbReference>
<dbReference type="Reactome" id="R-MMU-425366">
    <property type="pathway name" value="Transport of bile salts and organic acids, metal ions and amine compounds"/>
</dbReference>
<dbReference type="BioGRID-ORCS" id="242259">
    <property type="hits" value="1 hit in 81 CRISPR screens"/>
</dbReference>
<dbReference type="ChiTaRS" id="Slc44a5">
    <property type="organism name" value="mouse"/>
</dbReference>
<dbReference type="PRO" id="PR:Q5RJI2"/>
<dbReference type="Proteomes" id="UP000000589">
    <property type="component" value="Chromosome 3"/>
</dbReference>
<dbReference type="RNAct" id="Q5RJI2">
    <property type="molecule type" value="protein"/>
</dbReference>
<dbReference type="Bgee" id="ENSMUSG00000028360">
    <property type="expression patterns" value="Expressed in cortical plate and 57 other cell types or tissues"/>
</dbReference>
<dbReference type="ExpressionAtlas" id="Q5RJI2">
    <property type="expression patterns" value="baseline and differential"/>
</dbReference>
<dbReference type="GO" id="GO:0005886">
    <property type="term" value="C:plasma membrane"/>
    <property type="evidence" value="ECO:0000250"/>
    <property type="project" value="UniProtKB"/>
</dbReference>
<dbReference type="GO" id="GO:0015297">
    <property type="term" value="F:antiporter activity"/>
    <property type="evidence" value="ECO:0007669"/>
    <property type="project" value="UniProtKB-KW"/>
</dbReference>
<dbReference type="GO" id="GO:0015220">
    <property type="term" value="F:choline transmembrane transporter activity"/>
    <property type="evidence" value="ECO:0000250"/>
    <property type="project" value="UniProtKB"/>
</dbReference>
<dbReference type="GO" id="GO:0015871">
    <property type="term" value="P:choline transport"/>
    <property type="evidence" value="ECO:0000250"/>
    <property type="project" value="UniProtKB"/>
</dbReference>
<dbReference type="InterPro" id="IPR007603">
    <property type="entry name" value="Choline_transptr-like"/>
</dbReference>
<dbReference type="PANTHER" id="PTHR12385">
    <property type="entry name" value="CHOLINE TRANSPORTER-LIKE (SLC FAMILY 44)"/>
    <property type="match status" value="1"/>
</dbReference>
<dbReference type="PANTHER" id="PTHR12385:SF42">
    <property type="entry name" value="CHOLINE TRANSPORTER-LIKE PROTEIN 5"/>
    <property type="match status" value="1"/>
</dbReference>
<dbReference type="Pfam" id="PF04515">
    <property type="entry name" value="Choline_transpo"/>
    <property type="match status" value="1"/>
</dbReference>
<name>CTL5_MOUSE</name>
<evidence type="ECO:0000250" key="1">
    <source>
        <dbReference type="UniProtKB" id="Q8NCS7"/>
    </source>
</evidence>
<evidence type="ECO:0000255" key="2"/>
<evidence type="ECO:0000256" key="3">
    <source>
        <dbReference type="SAM" id="MobiDB-lite"/>
    </source>
</evidence>
<evidence type="ECO:0000305" key="4"/>